<feature type="chain" id="PRO_0000231743" description="Imidazole glycerol phosphate synthase subunit HisH">
    <location>
        <begin position="1"/>
        <end position="206"/>
    </location>
</feature>
<feature type="domain" description="Glutamine amidotransferase type-1" evidence="1">
    <location>
        <begin position="1"/>
        <end position="206"/>
    </location>
</feature>
<feature type="active site" description="Nucleophile" evidence="1">
    <location>
        <position position="79"/>
    </location>
</feature>
<feature type="active site" evidence="1">
    <location>
        <position position="188"/>
    </location>
</feature>
<feature type="active site" evidence="1">
    <location>
        <position position="190"/>
    </location>
</feature>
<sequence length="206" mass="22757">MIVIIDYGMGNLRSVQKGFEKVGYSARVTDDPAVVAQADKLVLPGVGAFRDCMDQLTAGGFVEPILRHVESGRPFLGICLGLQLLFTESEEFGHHQGLNIIPGRVVRFPGDMQEQGEVLKVPHMGWNQIDIQRPAPIFQGLDSGESVYFVHSYYVVPEDASVVAATADYGRTFCAAVWRDNVMATQFHPEKSQQVGLRILKNFGDM</sequence>
<keyword id="KW-0028">Amino-acid biosynthesis</keyword>
<keyword id="KW-0963">Cytoplasm</keyword>
<keyword id="KW-0315">Glutamine amidotransferase</keyword>
<keyword id="KW-0368">Histidine biosynthesis</keyword>
<keyword id="KW-0378">Hydrolase</keyword>
<keyword id="KW-0456">Lyase</keyword>
<keyword id="KW-1185">Reference proteome</keyword>
<name>HIS5_SYNC1</name>
<accession>Q3A135</accession>
<proteinExistence type="inferred from homology"/>
<evidence type="ECO:0000255" key="1">
    <source>
        <dbReference type="HAMAP-Rule" id="MF_00278"/>
    </source>
</evidence>
<dbReference type="EC" id="4.3.2.10" evidence="1"/>
<dbReference type="EC" id="3.5.1.2" evidence="1"/>
<dbReference type="EMBL" id="CP000142">
    <property type="protein sequence ID" value="ABA89922.1"/>
    <property type="molecule type" value="Genomic_DNA"/>
</dbReference>
<dbReference type="RefSeq" id="WP_011342465.1">
    <property type="nucleotide sequence ID" value="NC_007498.2"/>
</dbReference>
<dbReference type="SMR" id="Q3A135"/>
<dbReference type="STRING" id="338963.Pcar_2686"/>
<dbReference type="KEGG" id="pca:Pcar_2686"/>
<dbReference type="eggNOG" id="COG0118">
    <property type="taxonomic scope" value="Bacteria"/>
</dbReference>
<dbReference type="HOGENOM" id="CLU_071837_2_2_7"/>
<dbReference type="OrthoDB" id="9807749at2"/>
<dbReference type="UniPathway" id="UPA00031">
    <property type="reaction ID" value="UER00010"/>
</dbReference>
<dbReference type="Proteomes" id="UP000002534">
    <property type="component" value="Chromosome"/>
</dbReference>
<dbReference type="GO" id="GO:0005737">
    <property type="term" value="C:cytoplasm"/>
    <property type="evidence" value="ECO:0007669"/>
    <property type="project" value="UniProtKB-SubCell"/>
</dbReference>
<dbReference type="GO" id="GO:0004359">
    <property type="term" value="F:glutaminase activity"/>
    <property type="evidence" value="ECO:0007669"/>
    <property type="project" value="UniProtKB-EC"/>
</dbReference>
<dbReference type="GO" id="GO:0000107">
    <property type="term" value="F:imidazoleglycerol-phosphate synthase activity"/>
    <property type="evidence" value="ECO:0007669"/>
    <property type="project" value="UniProtKB-UniRule"/>
</dbReference>
<dbReference type="GO" id="GO:0016829">
    <property type="term" value="F:lyase activity"/>
    <property type="evidence" value="ECO:0007669"/>
    <property type="project" value="UniProtKB-KW"/>
</dbReference>
<dbReference type="GO" id="GO:0000105">
    <property type="term" value="P:L-histidine biosynthetic process"/>
    <property type="evidence" value="ECO:0007669"/>
    <property type="project" value="UniProtKB-UniRule"/>
</dbReference>
<dbReference type="CDD" id="cd01748">
    <property type="entry name" value="GATase1_IGP_Synthase"/>
    <property type="match status" value="1"/>
</dbReference>
<dbReference type="FunFam" id="3.40.50.880:FF:000009">
    <property type="entry name" value="Imidazole glycerol phosphate synthase subunit HisH"/>
    <property type="match status" value="1"/>
</dbReference>
<dbReference type="Gene3D" id="3.40.50.880">
    <property type="match status" value="1"/>
</dbReference>
<dbReference type="HAMAP" id="MF_00278">
    <property type="entry name" value="HisH"/>
    <property type="match status" value="1"/>
</dbReference>
<dbReference type="InterPro" id="IPR029062">
    <property type="entry name" value="Class_I_gatase-like"/>
</dbReference>
<dbReference type="InterPro" id="IPR017926">
    <property type="entry name" value="GATASE"/>
</dbReference>
<dbReference type="InterPro" id="IPR010139">
    <property type="entry name" value="Imidazole-glycPsynth_HisH"/>
</dbReference>
<dbReference type="NCBIfam" id="TIGR01855">
    <property type="entry name" value="IMP_synth_hisH"/>
    <property type="match status" value="1"/>
</dbReference>
<dbReference type="PANTHER" id="PTHR42701">
    <property type="entry name" value="IMIDAZOLE GLYCEROL PHOSPHATE SYNTHASE SUBUNIT HISH"/>
    <property type="match status" value="1"/>
</dbReference>
<dbReference type="PANTHER" id="PTHR42701:SF1">
    <property type="entry name" value="IMIDAZOLE GLYCEROL PHOSPHATE SYNTHASE SUBUNIT HISH"/>
    <property type="match status" value="1"/>
</dbReference>
<dbReference type="Pfam" id="PF00117">
    <property type="entry name" value="GATase"/>
    <property type="match status" value="1"/>
</dbReference>
<dbReference type="PIRSF" id="PIRSF000495">
    <property type="entry name" value="Amidotransf_hisH"/>
    <property type="match status" value="1"/>
</dbReference>
<dbReference type="SUPFAM" id="SSF52317">
    <property type="entry name" value="Class I glutamine amidotransferase-like"/>
    <property type="match status" value="1"/>
</dbReference>
<dbReference type="PROSITE" id="PS51273">
    <property type="entry name" value="GATASE_TYPE_1"/>
    <property type="match status" value="1"/>
</dbReference>
<comment type="function">
    <text evidence="1">IGPS catalyzes the conversion of PRFAR and glutamine to IGP, AICAR and glutamate. The HisH subunit catalyzes the hydrolysis of glutamine to glutamate and ammonia as part of the synthesis of IGP and AICAR. The resulting ammonia molecule is channeled to the active site of HisF.</text>
</comment>
<comment type="catalytic activity">
    <reaction evidence="1">
        <text>5-[(5-phospho-1-deoxy-D-ribulos-1-ylimino)methylamino]-1-(5-phospho-beta-D-ribosyl)imidazole-4-carboxamide + L-glutamine = D-erythro-1-(imidazol-4-yl)glycerol 3-phosphate + 5-amino-1-(5-phospho-beta-D-ribosyl)imidazole-4-carboxamide + L-glutamate + H(+)</text>
        <dbReference type="Rhea" id="RHEA:24793"/>
        <dbReference type="ChEBI" id="CHEBI:15378"/>
        <dbReference type="ChEBI" id="CHEBI:29985"/>
        <dbReference type="ChEBI" id="CHEBI:58278"/>
        <dbReference type="ChEBI" id="CHEBI:58359"/>
        <dbReference type="ChEBI" id="CHEBI:58475"/>
        <dbReference type="ChEBI" id="CHEBI:58525"/>
        <dbReference type="EC" id="4.3.2.10"/>
    </reaction>
</comment>
<comment type="catalytic activity">
    <reaction evidence="1">
        <text>L-glutamine + H2O = L-glutamate + NH4(+)</text>
        <dbReference type="Rhea" id="RHEA:15889"/>
        <dbReference type="ChEBI" id="CHEBI:15377"/>
        <dbReference type="ChEBI" id="CHEBI:28938"/>
        <dbReference type="ChEBI" id="CHEBI:29985"/>
        <dbReference type="ChEBI" id="CHEBI:58359"/>
        <dbReference type="EC" id="3.5.1.2"/>
    </reaction>
</comment>
<comment type="pathway">
    <text evidence="1">Amino-acid biosynthesis; L-histidine biosynthesis; L-histidine from 5-phospho-alpha-D-ribose 1-diphosphate: step 5/9.</text>
</comment>
<comment type="subunit">
    <text evidence="1">Heterodimer of HisH and HisF.</text>
</comment>
<comment type="subcellular location">
    <subcellularLocation>
        <location evidence="1">Cytoplasm</location>
    </subcellularLocation>
</comment>
<organism>
    <name type="scientific">Syntrophotalea carbinolica (strain DSM 2380 / NBRC 103641 / GraBd1)</name>
    <name type="common">Pelobacter carbinolicus</name>
    <dbReference type="NCBI Taxonomy" id="338963"/>
    <lineage>
        <taxon>Bacteria</taxon>
        <taxon>Pseudomonadati</taxon>
        <taxon>Thermodesulfobacteriota</taxon>
        <taxon>Desulfuromonadia</taxon>
        <taxon>Desulfuromonadales</taxon>
        <taxon>Syntrophotaleaceae</taxon>
        <taxon>Syntrophotalea</taxon>
    </lineage>
</organism>
<reference key="1">
    <citation type="submission" date="2005-10" db="EMBL/GenBank/DDBJ databases">
        <title>Complete sequence of Pelobacter carbinolicus DSM 2380.</title>
        <authorList>
            <person name="Copeland A."/>
            <person name="Lucas S."/>
            <person name="Lapidus A."/>
            <person name="Barry K."/>
            <person name="Detter J.C."/>
            <person name="Glavina T."/>
            <person name="Hammon N."/>
            <person name="Israni S."/>
            <person name="Pitluck S."/>
            <person name="Chertkov O."/>
            <person name="Schmutz J."/>
            <person name="Larimer F."/>
            <person name="Land M."/>
            <person name="Kyrpides N."/>
            <person name="Ivanova N."/>
            <person name="Richardson P."/>
        </authorList>
    </citation>
    <scope>NUCLEOTIDE SEQUENCE [LARGE SCALE GENOMIC DNA]</scope>
    <source>
        <strain>DSM 2380 / NBRC 103641 / GraBd1</strain>
    </source>
</reference>
<protein>
    <recommendedName>
        <fullName evidence="1">Imidazole glycerol phosphate synthase subunit HisH</fullName>
        <ecNumber evidence="1">4.3.2.10</ecNumber>
    </recommendedName>
    <alternativeName>
        <fullName evidence="1">IGP synthase glutaminase subunit</fullName>
        <ecNumber evidence="1">3.5.1.2</ecNumber>
    </alternativeName>
    <alternativeName>
        <fullName evidence="1">IGP synthase subunit HisH</fullName>
    </alternativeName>
    <alternativeName>
        <fullName evidence="1">ImGP synthase subunit HisH</fullName>
        <shortName evidence="1">IGPS subunit HisH</shortName>
    </alternativeName>
</protein>
<gene>
    <name evidence="1" type="primary">hisH</name>
    <name type="ordered locus">Pcar_2686</name>
</gene>